<reference key="1">
    <citation type="submission" date="2007-06" db="EMBL/GenBank/DDBJ databases">
        <title>Complete sequence of Sinorhizobium medicae WSM419 chromosome.</title>
        <authorList>
            <consortium name="US DOE Joint Genome Institute"/>
            <person name="Copeland A."/>
            <person name="Lucas S."/>
            <person name="Lapidus A."/>
            <person name="Barry K."/>
            <person name="Glavina del Rio T."/>
            <person name="Dalin E."/>
            <person name="Tice H."/>
            <person name="Pitluck S."/>
            <person name="Chain P."/>
            <person name="Malfatti S."/>
            <person name="Shin M."/>
            <person name="Vergez L."/>
            <person name="Schmutz J."/>
            <person name="Larimer F."/>
            <person name="Land M."/>
            <person name="Hauser L."/>
            <person name="Kyrpides N."/>
            <person name="Mikhailova N."/>
            <person name="Reeve W.G."/>
            <person name="Richardson P."/>
        </authorList>
    </citation>
    <scope>NUCLEOTIDE SEQUENCE [LARGE SCALE GENOMIC DNA]</scope>
    <source>
        <strain>WSM419</strain>
    </source>
</reference>
<keyword id="KW-0143">Chaperone</keyword>
<keyword id="KW-0963">Cytoplasm</keyword>
<keyword id="KW-0235">DNA replication</keyword>
<keyword id="KW-0479">Metal-binding</keyword>
<keyword id="KW-0677">Repeat</keyword>
<keyword id="KW-0346">Stress response</keyword>
<keyword id="KW-0862">Zinc</keyword>
<keyword id="KW-0863">Zinc-finger</keyword>
<protein>
    <recommendedName>
        <fullName evidence="1">Chaperone protein DnaJ</fullName>
    </recommendedName>
</protein>
<organism>
    <name type="scientific">Sinorhizobium medicae (strain WSM419)</name>
    <name type="common">Ensifer medicae</name>
    <dbReference type="NCBI Taxonomy" id="366394"/>
    <lineage>
        <taxon>Bacteria</taxon>
        <taxon>Pseudomonadati</taxon>
        <taxon>Pseudomonadota</taxon>
        <taxon>Alphaproteobacteria</taxon>
        <taxon>Hyphomicrobiales</taxon>
        <taxon>Rhizobiaceae</taxon>
        <taxon>Sinorhizobium/Ensifer group</taxon>
        <taxon>Sinorhizobium</taxon>
    </lineage>
</organism>
<sequence>MKRDLYETLGVQKSADEKELKSAFRKLAMKYHPDRNPGDNEAEKSFKEINEAYETLKDPQKRAAYDRYGHAAFEQGGMGNGFAGGGAHGFSDIFEDIFGEMMGGRQRRSSGGRERGADLRYNMEISLEEAYSGKTAQIRVPTSITCDVCTGTGAKPGTSPKTCGTCQGTGRVRAAQGFFSIERTCPTCGGRGQTITDPCTKCHGQGRVVEERTLSVNIPAGIEDGTRIRLSGEGEAGLRGGPAGDLYIFLSVKPHEFYQRDGADLYCAVPISMTTATLGGKFDVTTLDGTKSRVTVPEGTQAGKQFRLKGKGMPVLRSSQMGDLYIQIQIETPQKLTKRQRELLQEFEQISSKENNPESAGFFSRMKGFFDTLSE</sequence>
<evidence type="ECO:0000255" key="1">
    <source>
        <dbReference type="HAMAP-Rule" id="MF_01152"/>
    </source>
</evidence>
<comment type="function">
    <text evidence="1">Participates actively in the response to hyperosmotic and heat shock by preventing the aggregation of stress-denatured proteins and by disaggregating proteins, also in an autonomous, DnaK-independent fashion. Unfolded proteins bind initially to DnaJ; upon interaction with the DnaJ-bound protein, DnaK hydrolyzes its bound ATP, resulting in the formation of a stable complex. GrpE releases ADP from DnaK; ATP binding to DnaK triggers the release of the substrate protein, thus completing the reaction cycle. Several rounds of ATP-dependent interactions between DnaJ, DnaK and GrpE are required for fully efficient folding. Also involved, together with DnaK and GrpE, in the DNA replication of plasmids through activation of initiation proteins.</text>
</comment>
<comment type="cofactor">
    <cofactor evidence="1">
        <name>Zn(2+)</name>
        <dbReference type="ChEBI" id="CHEBI:29105"/>
    </cofactor>
    <text evidence="1">Binds 2 Zn(2+) ions per monomer.</text>
</comment>
<comment type="subunit">
    <text evidence="1">Homodimer.</text>
</comment>
<comment type="subcellular location">
    <subcellularLocation>
        <location evidence="1">Cytoplasm</location>
    </subcellularLocation>
</comment>
<comment type="domain">
    <text evidence="1">The J domain is necessary and sufficient to stimulate DnaK ATPase activity. Zinc center 1 plays an important role in the autonomous, DnaK-independent chaperone activity of DnaJ. Zinc center 2 is essential for interaction with DnaK and for DnaJ activity.</text>
</comment>
<comment type="similarity">
    <text evidence="1">Belongs to the DnaJ family.</text>
</comment>
<dbReference type="EMBL" id="CP000738">
    <property type="protein sequence ID" value="ABR62211.1"/>
    <property type="molecule type" value="Genomic_DNA"/>
</dbReference>
<dbReference type="RefSeq" id="WP_012067592.1">
    <property type="nucleotide sequence ID" value="NC_009636.1"/>
</dbReference>
<dbReference type="RefSeq" id="YP_001329046.1">
    <property type="nucleotide sequence ID" value="NC_009636.1"/>
</dbReference>
<dbReference type="SMR" id="A6UEY1"/>
<dbReference type="STRING" id="366394.Smed_3390"/>
<dbReference type="GeneID" id="61610941"/>
<dbReference type="KEGG" id="smd:Smed_3390"/>
<dbReference type="PATRIC" id="fig|366394.8.peg.6636"/>
<dbReference type="eggNOG" id="COG0484">
    <property type="taxonomic scope" value="Bacteria"/>
</dbReference>
<dbReference type="HOGENOM" id="CLU_017633_0_7_5"/>
<dbReference type="OrthoDB" id="9779889at2"/>
<dbReference type="Proteomes" id="UP000001108">
    <property type="component" value="Chromosome"/>
</dbReference>
<dbReference type="GO" id="GO:0005737">
    <property type="term" value="C:cytoplasm"/>
    <property type="evidence" value="ECO:0007669"/>
    <property type="project" value="UniProtKB-SubCell"/>
</dbReference>
<dbReference type="GO" id="GO:0005524">
    <property type="term" value="F:ATP binding"/>
    <property type="evidence" value="ECO:0007669"/>
    <property type="project" value="InterPro"/>
</dbReference>
<dbReference type="GO" id="GO:0031072">
    <property type="term" value="F:heat shock protein binding"/>
    <property type="evidence" value="ECO:0007669"/>
    <property type="project" value="InterPro"/>
</dbReference>
<dbReference type="GO" id="GO:0051082">
    <property type="term" value="F:unfolded protein binding"/>
    <property type="evidence" value="ECO:0007669"/>
    <property type="project" value="UniProtKB-UniRule"/>
</dbReference>
<dbReference type="GO" id="GO:0008270">
    <property type="term" value="F:zinc ion binding"/>
    <property type="evidence" value="ECO:0007669"/>
    <property type="project" value="UniProtKB-UniRule"/>
</dbReference>
<dbReference type="GO" id="GO:0051085">
    <property type="term" value="P:chaperone cofactor-dependent protein refolding"/>
    <property type="evidence" value="ECO:0007669"/>
    <property type="project" value="TreeGrafter"/>
</dbReference>
<dbReference type="GO" id="GO:0006260">
    <property type="term" value="P:DNA replication"/>
    <property type="evidence" value="ECO:0007669"/>
    <property type="project" value="UniProtKB-KW"/>
</dbReference>
<dbReference type="GO" id="GO:0042026">
    <property type="term" value="P:protein refolding"/>
    <property type="evidence" value="ECO:0007669"/>
    <property type="project" value="TreeGrafter"/>
</dbReference>
<dbReference type="GO" id="GO:0009408">
    <property type="term" value="P:response to heat"/>
    <property type="evidence" value="ECO:0007669"/>
    <property type="project" value="InterPro"/>
</dbReference>
<dbReference type="CDD" id="cd06257">
    <property type="entry name" value="DnaJ"/>
    <property type="match status" value="1"/>
</dbReference>
<dbReference type="CDD" id="cd10747">
    <property type="entry name" value="DnaJ_C"/>
    <property type="match status" value="1"/>
</dbReference>
<dbReference type="CDD" id="cd10719">
    <property type="entry name" value="DnaJ_zf"/>
    <property type="match status" value="1"/>
</dbReference>
<dbReference type="FunFam" id="1.10.287.110:FF:000034">
    <property type="entry name" value="Chaperone protein DnaJ"/>
    <property type="match status" value="1"/>
</dbReference>
<dbReference type="FunFam" id="2.10.230.10:FF:000002">
    <property type="entry name" value="Molecular chaperone DnaJ"/>
    <property type="match status" value="1"/>
</dbReference>
<dbReference type="FunFam" id="2.60.260.20:FF:000004">
    <property type="entry name" value="Molecular chaperone DnaJ"/>
    <property type="match status" value="1"/>
</dbReference>
<dbReference type="Gene3D" id="1.10.287.110">
    <property type="entry name" value="DnaJ domain"/>
    <property type="match status" value="1"/>
</dbReference>
<dbReference type="Gene3D" id="2.10.230.10">
    <property type="entry name" value="Heat shock protein DnaJ, cysteine-rich domain"/>
    <property type="match status" value="1"/>
</dbReference>
<dbReference type="Gene3D" id="2.60.260.20">
    <property type="entry name" value="Urease metallochaperone UreE, N-terminal domain"/>
    <property type="match status" value="2"/>
</dbReference>
<dbReference type="HAMAP" id="MF_01152">
    <property type="entry name" value="DnaJ"/>
    <property type="match status" value="1"/>
</dbReference>
<dbReference type="InterPro" id="IPR012724">
    <property type="entry name" value="DnaJ"/>
</dbReference>
<dbReference type="InterPro" id="IPR002939">
    <property type="entry name" value="DnaJ_C"/>
</dbReference>
<dbReference type="InterPro" id="IPR001623">
    <property type="entry name" value="DnaJ_domain"/>
</dbReference>
<dbReference type="InterPro" id="IPR018253">
    <property type="entry name" value="DnaJ_domain_CS"/>
</dbReference>
<dbReference type="InterPro" id="IPR008971">
    <property type="entry name" value="HSP40/DnaJ_pept-bd"/>
</dbReference>
<dbReference type="InterPro" id="IPR001305">
    <property type="entry name" value="HSP_DnaJ_Cys-rich_dom"/>
</dbReference>
<dbReference type="InterPro" id="IPR036410">
    <property type="entry name" value="HSP_DnaJ_Cys-rich_dom_sf"/>
</dbReference>
<dbReference type="InterPro" id="IPR036869">
    <property type="entry name" value="J_dom_sf"/>
</dbReference>
<dbReference type="NCBIfam" id="TIGR02349">
    <property type="entry name" value="DnaJ_bact"/>
    <property type="match status" value="1"/>
</dbReference>
<dbReference type="NCBIfam" id="NF008035">
    <property type="entry name" value="PRK10767.1"/>
    <property type="match status" value="1"/>
</dbReference>
<dbReference type="PANTHER" id="PTHR43096:SF48">
    <property type="entry name" value="CHAPERONE PROTEIN DNAJ"/>
    <property type="match status" value="1"/>
</dbReference>
<dbReference type="PANTHER" id="PTHR43096">
    <property type="entry name" value="DNAJ HOMOLOG 1, MITOCHONDRIAL-RELATED"/>
    <property type="match status" value="1"/>
</dbReference>
<dbReference type="Pfam" id="PF00226">
    <property type="entry name" value="DnaJ"/>
    <property type="match status" value="1"/>
</dbReference>
<dbReference type="Pfam" id="PF01556">
    <property type="entry name" value="DnaJ_C"/>
    <property type="match status" value="1"/>
</dbReference>
<dbReference type="Pfam" id="PF00684">
    <property type="entry name" value="DnaJ_CXXCXGXG"/>
    <property type="match status" value="1"/>
</dbReference>
<dbReference type="PRINTS" id="PR00625">
    <property type="entry name" value="JDOMAIN"/>
</dbReference>
<dbReference type="SMART" id="SM00271">
    <property type="entry name" value="DnaJ"/>
    <property type="match status" value="1"/>
</dbReference>
<dbReference type="SUPFAM" id="SSF46565">
    <property type="entry name" value="Chaperone J-domain"/>
    <property type="match status" value="1"/>
</dbReference>
<dbReference type="SUPFAM" id="SSF57938">
    <property type="entry name" value="DnaJ/Hsp40 cysteine-rich domain"/>
    <property type="match status" value="1"/>
</dbReference>
<dbReference type="SUPFAM" id="SSF49493">
    <property type="entry name" value="HSP40/DnaJ peptide-binding domain"/>
    <property type="match status" value="2"/>
</dbReference>
<dbReference type="PROSITE" id="PS00636">
    <property type="entry name" value="DNAJ_1"/>
    <property type="match status" value="1"/>
</dbReference>
<dbReference type="PROSITE" id="PS50076">
    <property type="entry name" value="DNAJ_2"/>
    <property type="match status" value="1"/>
</dbReference>
<dbReference type="PROSITE" id="PS51188">
    <property type="entry name" value="ZF_CR"/>
    <property type="match status" value="1"/>
</dbReference>
<name>DNAJ_SINMW</name>
<feature type="chain" id="PRO_1000085306" description="Chaperone protein DnaJ">
    <location>
        <begin position="1"/>
        <end position="375"/>
    </location>
</feature>
<feature type="domain" description="J" evidence="1">
    <location>
        <begin position="4"/>
        <end position="69"/>
    </location>
</feature>
<feature type="repeat" description="CXXCXGXG motif">
    <location>
        <begin position="146"/>
        <end position="153"/>
    </location>
</feature>
<feature type="repeat" description="CXXCXGXG motif">
    <location>
        <begin position="163"/>
        <end position="170"/>
    </location>
</feature>
<feature type="repeat" description="CXXCXGXG motif">
    <location>
        <begin position="185"/>
        <end position="192"/>
    </location>
</feature>
<feature type="repeat" description="CXXCXGXG motif">
    <location>
        <begin position="199"/>
        <end position="206"/>
    </location>
</feature>
<feature type="zinc finger region" description="CR-type" evidence="1">
    <location>
        <begin position="133"/>
        <end position="211"/>
    </location>
</feature>
<feature type="binding site" evidence="1">
    <location>
        <position position="146"/>
    </location>
    <ligand>
        <name>Zn(2+)</name>
        <dbReference type="ChEBI" id="CHEBI:29105"/>
        <label>1</label>
    </ligand>
</feature>
<feature type="binding site" evidence="1">
    <location>
        <position position="149"/>
    </location>
    <ligand>
        <name>Zn(2+)</name>
        <dbReference type="ChEBI" id="CHEBI:29105"/>
        <label>1</label>
    </ligand>
</feature>
<feature type="binding site" evidence="1">
    <location>
        <position position="163"/>
    </location>
    <ligand>
        <name>Zn(2+)</name>
        <dbReference type="ChEBI" id="CHEBI:29105"/>
        <label>2</label>
    </ligand>
</feature>
<feature type="binding site" evidence="1">
    <location>
        <position position="166"/>
    </location>
    <ligand>
        <name>Zn(2+)</name>
        <dbReference type="ChEBI" id="CHEBI:29105"/>
        <label>2</label>
    </ligand>
</feature>
<feature type="binding site" evidence="1">
    <location>
        <position position="185"/>
    </location>
    <ligand>
        <name>Zn(2+)</name>
        <dbReference type="ChEBI" id="CHEBI:29105"/>
        <label>2</label>
    </ligand>
</feature>
<feature type="binding site" evidence="1">
    <location>
        <position position="188"/>
    </location>
    <ligand>
        <name>Zn(2+)</name>
        <dbReference type="ChEBI" id="CHEBI:29105"/>
        <label>2</label>
    </ligand>
</feature>
<feature type="binding site" evidence="1">
    <location>
        <position position="199"/>
    </location>
    <ligand>
        <name>Zn(2+)</name>
        <dbReference type="ChEBI" id="CHEBI:29105"/>
        <label>1</label>
    </ligand>
</feature>
<feature type="binding site" evidence="1">
    <location>
        <position position="202"/>
    </location>
    <ligand>
        <name>Zn(2+)</name>
        <dbReference type="ChEBI" id="CHEBI:29105"/>
        <label>1</label>
    </ligand>
</feature>
<proteinExistence type="inferred from homology"/>
<gene>
    <name evidence="1" type="primary">dnaJ</name>
    <name type="ordered locus">Smed_3390</name>
</gene>
<accession>A6UEY1</accession>